<dbReference type="EMBL" id="CP000822">
    <property type="protein sequence ID" value="ABV14894.1"/>
    <property type="molecule type" value="Genomic_DNA"/>
</dbReference>
<dbReference type="RefSeq" id="WP_012134589.1">
    <property type="nucleotide sequence ID" value="NC_009792.1"/>
</dbReference>
<dbReference type="SMR" id="A8AN31"/>
<dbReference type="STRING" id="290338.CKO_03818"/>
<dbReference type="GeneID" id="45137496"/>
<dbReference type="KEGG" id="cko:CKO_03818"/>
<dbReference type="HOGENOM" id="CLU_018808_8_3_6"/>
<dbReference type="OrthoDB" id="9764416at2"/>
<dbReference type="Proteomes" id="UP000008148">
    <property type="component" value="Chromosome"/>
</dbReference>
<dbReference type="GO" id="GO:0005886">
    <property type="term" value="C:plasma membrane"/>
    <property type="evidence" value="ECO:0007669"/>
    <property type="project" value="UniProtKB-SubCell"/>
</dbReference>
<dbReference type="GO" id="GO:0015123">
    <property type="term" value="F:acetate transmembrane transporter activity"/>
    <property type="evidence" value="ECO:0007669"/>
    <property type="project" value="UniProtKB-UniRule"/>
</dbReference>
<dbReference type="GO" id="GO:0043879">
    <property type="term" value="F:glycolate transmembrane transporter activity"/>
    <property type="evidence" value="ECO:0007669"/>
    <property type="project" value="InterPro"/>
</dbReference>
<dbReference type="GO" id="GO:0015293">
    <property type="term" value="F:symporter activity"/>
    <property type="evidence" value="ECO:0007669"/>
    <property type="project" value="UniProtKB-KW"/>
</dbReference>
<dbReference type="GO" id="GO:0006847">
    <property type="term" value="P:plasma membrane acetate transport"/>
    <property type="evidence" value="ECO:0007669"/>
    <property type="project" value="TreeGrafter"/>
</dbReference>
<dbReference type="GO" id="GO:0006814">
    <property type="term" value="P:sodium ion transport"/>
    <property type="evidence" value="ECO:0007669"/>
    <property type="project" value="UniProtKB-KW"/>
</dbReference>
<dbReference type="CDD" id="cd11480">
    <property type="entry name" value="SLC5sbd_u4"/>
    <property type="match status" value="1"/>
</dbReference>
<dbReference type="FunFam" id="1.20.1730.10:FF:000001">
    <property type="entry name" value="Cation/acetate symporter ActP"/>
    <property type="match status" value="1"/>
</dbReference>
<dbReference type="Gene3D" id="1.20.1730.10">
    <property type="entry name" value="Sodium/glucose cotransporter"/>
    <property type="match status" value="1"/>
</dbReference>
<dbReference type="HAMAP" id="MF_01426">
    <property type="entry name" value="Acet_symport_ActP"/>
    <property type="match status" value="1"/>
</dbReference>
<dbReference type="InterPro" id="IPR014083">
    <property type="entry name" value="Cation/Ac_symporter_ActP"/>
</dbReference>
<dbReference type="InterPro" id="IPR038377">
    <property type="entry name" value="Na/Glc_symporter_sf"/>
</dbReference>
<dbReference type="InterPro" id="IPR001734">
    <property type="entry name" value="Na/solute_symporter"/>
</dbReference>
<dbReference type="InterPro" id="IPR018212">
    <property type="entry name" value="Na/solute_symporter_CS"/>
</dbReference>
<dbReference type="InterPro" id="IPR050277">
    <property type="entry name" value="Sodium:Solute_Symporter"/>
</dbReference>
<dbReference type="NCBIfam" id="NF006903">
    <property type="entry name" value="PRK09395.1"/>
    <property type="match status" value="1"/>
</dbReference>
<dbReference type="NCBIfam" id="NF009135">
    <property type="entry name" value="PRK12488.1"/>
    <property type="match status" value="1"/>
</dbReference>
<dbReference type="NCBIfam" id="TIGR00813">
    <property type="entry name" value="sss"/>
    <property type="match status" value="1"/>
</dbReference>
<dbReference type="NCBIfam" id="TIGR02711">
    <property type="entry name" value="symport_actP"/>
    <property type="match status" value="1"/>
</dbReference>
<dbReference type="PANTHER" id="PTHR48086:SF6">
    <property type="entry name" value="CATION_ACETATE SYMPORTER ACTP"/>
    <property type="match status" value="1"/>
</dbReference>
<dbReference type="PANTHER" id="PTHR48086">
    <property type="entry name" value="SODIUM/PROLINE SYMPORTER-RELATED"/>
    <property type="match status" value="1"/>
</dbReference>
<dbReference type="Pfam" id="PF00474">
    <property type="entry name" value="SSF"/>
    <property type="match status" value="1"/>
</dbReference>
<dbReference type="PROSITE" id="PS00456">
    <property type="entry name" value="NA_SOLUT_SYMP_1"/>
    <property type="match status" value="1"/>
</dbReference>
<dbReference type="PROSITE" id="PS00457">
    <property type="entry name" value="NA_SOLUT_SYMP_2"/>
    <property type="match status" value="1"/>
</dbReference>
<dbReference type="PROSITE" id="PS50283">
    <property type="entry name" value="NA_SOLUT_SYMP_3"/>
    <property type="match status" value="1"/>
</dbReference>
<evidence type="ECO:0000255" key="1">
    <source>
        <dbReference type="HAMAP-Rule" id="MF_01426"/>
    </source>
</evidence>
<organism>
    <name type="scientific">Citrobacter koseri (strain ATCC BAA-895 / CDC 4225-83 / SGSC4696)</name>
    <dbReference type="NCBI Taxonomy" id="290338"/>
    <lineage>
        <taxon>Bacteria</taxon>
        <taxon>Pseudomonadati</taxon>
        <taxon>Pseudomonadota</taxon>
        <taxon>Gammaproteobacteria</taxon>
        <taxon>Enterobacterales</taxon>
        <taxon>Enterobacteriaceae</taxon>
        <taxon>Citrobacter</taxon>
    </lineage>
</organism>
<sequence>MKRVLTALAATLPFAANAADAISGAVERQPTNWQAIVMFLIFVVFTLGITYWASKRVRSRSDYYTAGGNITGFQNGLAIAGDYMSAASFLGISALVFTSGYDGLIYSLGFLVGWPIILFLIAERLRNLGRYTFADVASYRLKQGPIRILSACGSLVVVALYLIAQMVGAGKLIELLFGLNYHIAVVLVGVLMMMYVLFGGMLATTWVQIIKAVLLLFGASFMAFMVMKHVGFSFNNLFTEAMAVHPKGSAIMSPGGLVNDPISALSLGLGLMFGTAGLPHILMRFFTVSDAREARKSVFYATGFMGYFYILTFIIGFGAIMLVGANPEYKDAAGALIGGNNMAAVHLANAVGGNLFLGFISAVAFATILAVVAGLTLAGASAVSHDLYANVFRKGATEREELRVSKITVLVLGVIAIILGVLFENQNIAFMVGLAFAIAASCNFPIILLSMYWSKLTTRGAMMGGWLGLVTAVVLMVLGPTIWVQILGHEKAIFPYEYPALFSISVAFIGIWFFSATDNSAEGNREREQFRAQFIRSQTGYGVEQGRAH</sequence>
<comment type="function">
    <text evidence="1">Transports acetate.</text>
</comment>
<comment type="subcellular location">
    <subcellularLocation>
        <location evidence="1">Cell inner membrane</location>
        <topology evidence="1">Multi-pass membrane protein</topology>
    </subcellularLocation>
</comment>
<comment type="similarity">
    <text evidence="1">Belongs to the sodium:solute symporter (SSF) (TC 2.A.21) family.</text>
</comment>
<keyword id="KW-0997">Cell inner membrane</keyword>
<keyword id="KW-1003">Cell membrane</keyword>
<keyword id="KW-0406">Ion transport</keyword>
<keyword id="KW-0472">Membrane</keyword>
<keyword id="KW-1185">Reference proteome</keyword>
<keyword id="KW-0915">Sodium</keyword>
<keyword id="KW-0739">Sodium transport</keyword>
<keyword id="KW-0769">Symport</keyword>
<keyword id="KW-0812">Transmembrane</keyword>
<keyword id="KW-1133">Transmembrane helix</keyword>
<keyword id="KW-0813">Transport</keyword>
<gene>
    <name evidence="1" type="primary">actP</name>
    <name type="ordered locus">CKO_03818</name>
</gene>
<protein>
    <recommendedName>
        <fullName evidence="1">Cation/acetate symporter ActP</fullName>
    </recommendedName>
    <alternativeName>
        <fullName evidence="1">Acetate permease</fullName>
    </alternativeName>
    <alternativeName>
        <fullName evidence="1">Acetate transporter ActP</fullName>
    </alternativeName>
</protein>
<feature type="chain" id="PRO_1000024335" description="Cation/acetate symporter ActP">
    <location>
        <begin position="1"/>
        <end position="549"/>
    </location>
</feature>
<feature type="transmembrane region" description="Helical" evidence="1">
    <location>
        <begin position="33"/>
        <end position="53"/>
    </location>
</feature>
<feature type="transmembrane region" description="Helical" evidence="1">
    <location>
        <begin position="77"/>
        <end position="97"/>
    </location>
</feature>
<feature type="transmembrane region" description="Helical" evidence="1">
    <location>
        <begin position="103"/>
        <end position="123"/>
    </location>
</feature>
<feature type="transmembrane region" description="Helical" evidence="1">
    <location>
        <begin position="148"/>
        <end position="168"/>
    </location>
</feature>
<feature type="transmembrane region" description="Helical" evidence="1">
    <location>
        <begin position="183"/>
        <end position="203"/>
    </location>
</feature>
<feature type="transmembrane region" description="Helical" evidence="1">
    <location>
        <begin position="206"/>
        <end position="226"/>
    </location>
</feature>
<feature type="transmembrane region" description="Helical" evidence="1">
    <location>
        <begin position="262"/>
        <end position="282"/>
    </location>
</feature>
<feature type="transmembrane region" description="Helical" evidence="1">
    <location>
        <begin position="303"/>
        <end position="323"/>
    </location>
</feature>
<feature type="transmembrane region" description="Helical" evidence="1">
    <location>
        <begin position="355"/>
        <end position="375"/>
    </location>
</feature>
<feature type="transmembrane region" description="Helical" evidence="1">
    <location>
        <begin position="404"/>
        <end position="424"/>
    </location>
</feature>
<feature type="transmembrane region" description="Helical" evidence="1">
    <location>
        <begin position="428"/>
        <end position="448"/>
    </location>
</feature>
<feature type="transmembrane region" description="Helical" evidence="1">
    <location>
        <begin position="464"/>
        <end position="484"/>
    </location>
</feature>
<feature type="transmembrane region" description="Helical" evidence="1">
    <location>
        <begin position="493"/>
        <end position="513"/>
    </location>
</feature>
<proteinExistence type="inferred from homology"/>
<reference key="1">
    <citation type="submission" date="2007-08" db="EMBL/GenBank/DDBJ databases">
        <authorList>
            <consortium name="The Citrobacter koseri Genome Sequencing Project"/>
            <person name="McClelland M."/>
            <person name="Sanderson E.K."/>
            <person name="Porwollik S."/>
            <person name="Spieth J."/>
            <person name="Clifton W.S."/>
            <person name="Latreille P."/>
            <person name="Courtney L."/>
            <person name="Wang C."/>
            <person name="Pepin K."/>
            <person name="Bhonagiri V."/>
            <person name="Nash W."/>
            <person name="Johnson M."/>
            <person name="Thiruvilangam P."/>
            <person name="Wilson R."/>
        </authorList>
    </citation>
    <scope>NUCLEOTIDE SEQUENCE [LARGE SCALE GENOMIC DNA]</scope>
    <source>
        <strain>ATCC BAA-895 / CDC 4225-83 / SGSC4696</strain>
    </source>
</reference>
<accession>A8AN31</accession>
<name>ACTP_CITK8</name>